<gene>
    <name type="primary">Prx</name>
</gene>
<protein>
    <recommendedName>
        <fullName evidence="10">Periaxin</fullName>
    </recommendedName>
</protein>
<organism>
    <name type="scientific">Rattus norvegicus</name>
    <name type="common">Rat</name>
    <dbReference type="NCBI Taxonomy" id="10116"/>
    <lineage>
        <taxon>Eukaryota</taxon>
        <taxon>Metazoa</taxon>
        <taxon>Chordata</taxon>
        <taxon>Craniata</taxon>
        <taxon>Vertebrata</taxon>
        <taxon>Euteleostomi</taxon>
        <taxon>Mammalia</taxon>
        <taxon>Eutheria</taxon>
        <taxon>Euarchontoglires</taxon>
        <taxon>Glires</taxon>
        <taxon>Rodentia</taxon>
        <taxon>Myomorpha</taxon>
        <taxon>Muroidea</taxon>
        <taxon>Muridae</taxon>
        <taxon>Murinae</taxon>
        <taxon>Rattus</taxon>
    </lineage>
</organism>
<sequence>MEARSRSAEELRRAELVEIIVETEAQTGVSGFNVAGGGKEGIFVRELREDSPAAKSLSLQEGDQLLSARVFFENFKYEDALRLLQCAEPYKVSFCLKRTVPTGDLALRPGTVSGYEMKGPRAKVAKLNIQSLSPVKKKKMVIGTLGTPADLAPVDVEFSFPKFSRLRRGLKADAVKGPVPAAPARRRLQLPRLRVREVAEEAQVARMAAAAPPSRKAKSEAEVATGAGFTAPQIELVGPRLPSAEVGVPKVSVPKGTPSTEAASGFALHLPTLGLGAPAAPAVEPPTTGIQVPQVELPTLPSLPTLPTLPCLDTQEGAAVVKVPTLDVAAPSVEVDLALPGAEVEAQGEVPEVALKMPRLSFPRFGVRGKEATEAKVVKGSPEAKAKGPRLRMPTFGLSLLESRPSGPEVAAESKLKLPTLKMPSFGISVAGPEVKAPKGPEVKLPKVPEIKLPKAPEAAIPDVQLPEVQLPKMSDMKLPKIPEMAVPDVHLPEVKLPKVPEMKVPEMKLPKIPEMAVPDVHLPDIQLPKVPEMKLPDMKLPKVPEMAVPDVHLPDIQLPKVPEMKLPDMKLPKVPEMAVPDVRIPEVQLPKVSEVKLPKIPDMAVPDVRLPELQLPKMSEVKLPKIPDMAVPDVRLPEVQLPKVSELKLPKVPEMTMPDIRLPEVQLPKVPDIKLPEIKLPKVPEMAVPDVPLPELQLPKVPQVPDVHLPKVPEMKLPKVPEAQRKSAGAEQAEKTEFSFKLPKMTVPKLGKVTKPGEAGIEVPDKLLILPCLQPEVGTEVARVGVPSLSLPSVELDLPGALGLEGQVQEAVSGKVEKPEGPRVAVGTGEAGFRVPSVEIVNPQLPTVEVKKEQLEMVEMKVKPTSKFSLPKFGLSGPKAVKAEVEGPGRATKLKVSKFAISLPRARAGTDADAKGAGEAGLLPALDLSIPQLSLDAQLPSGKVEVAGAESKPKGSRFALPKFGAKGRDSEADVLVAGEAELEGKGWGWDGKVKMPKLKMPSFGLSRGKEAEIQDGRVSPGEKLEAIAGQLKIPEVELVTPGAQETEKVTSGVKPSGLQVSTTRQVVAEGQEGAQRVSSLGISLPQVELASFGEAGPEIAAPSAEGTVGSRIQVPQVMLELPGTQVAGGDLLVGEGIFKMPTVTVPQLELDVGLGHEAQAGETAKSEGGLKLKLPTLGAGGKGEGAEAQSPEAQHTFHISLPDVELTSPVSSHAEYQVVEGDGDGGHKLKVRLPLFGLARAKEGIETGEKVKSPKLRLPRVGFSQSESASGEGSPSPEEEEEGSGEGASGRRGRVRVRLPRVGLASPSKGSKGQEGDAASKSPVGEKSPKFRFPRVSLSPKARSGSKDREEGGFRVRLPSVGFSETAAPGSARIEGTQAAAI</sequence>
<accession>Q63425</accession>
<reference key="1">
    <citation type="journal article" date="1994" name="Neuron">
        <title>Periaxin, a novel protein of myelinating Schwann cells with a possible role in axonal ensheathment.</title>
        <authorList>
            <person name="Gillespie C.S."/>
            <person name="Sherman D.L."/>
            <person name="Blair G.E."/>
            <person name="Brophy P.J."/>
        </authorList>
    </citation>
    <scope>NUCLEOTIDE SEQUENCE [MRNA] (ISOFORM 1)</scope>
    <scope>SUBCELLULAR LOCATION</scope>
    <scope>TISSUE SPECIFICITY</scope>
    <scope>DEVELOPMENTAL STAGE</scope>
    <source>
        <strain>Wistar</strain>
    </source>
</reference>
<reference key="2">
    <citation type="submission" date="2001-09" db="EMBL/GenBank/DDBJ databases">
        <authorList>
            <person name="Brophy P.J."/>
        </authorList>
    </citation>
    <scope>SEQUENCE REVISION TO 1364-1371</scope>
</reference>
<reference key="3">
    <citation type="journal article" date="1998" name="J. Biol. Chem.">
        <title>Two PDZ domain proteins encoded by the murine periaxin gene are the result of alternative intron retention and are differentially targeted in Schwann cells.</title>
        <authorList>
            <person name="Dytrych L."/>
            <person name="Sherman D.L."/>
            <person name="Gillespie C.S."/>
            <person name="Brophy P.J."/>
        </authorList>
    </citation>
    <scope>NUCLEOTIDE SEQUENCE [MRNA] (ISOFORM 2)</scope>
</reference>
<reference key="4">
    <citation type="submission" date="2009-01" db="UniProtKB">
        <authorList>
            <person name="Lubec G."/>
            <person name="Chen W.-Q."/>
        </authorList>
    </citation>
    <scope>PROTEIN SEQUENCE OF 1019-1033</scope>
    <scope>IDENTIFICATION BY MASS SPECTROMETRY</scope>
    <source>
        <strain>Sprague-Dawley</strain>
        <tissue>Hippocampus</tissue>
    </source>
</reference>
<reference key="5">
    <citation type="journal article" date="2000" name="J. Biol. Chem.">
        <title>A tripartite nuclear localization signal in the PDZ-domain protein L-periaxin.</title>
        <authorList>
            <person name="Sherman D.L."/>
            <person name="Brophy P.J."/>
        </authorList>
    </citation>
    <scope>SUBCELLULAR LOCATION</scope>
    <scope>TISSUE SPECIFICITY</scope>
    <scope>DOMAIN</scope>
</reference>
<reference key="6">
    <citation type="journal article" date="2001" name="Neuron">
        <title>Specific disruption of a Schwann cell dystrophin-related protein complex in a demyelinating neuropathy.</title>
        <authorList>
            <person name="Sherman D.L."/>
            <person name="Fabrizi C."/>
            <person name="Gillespie C.S."/>
            <person name="Brophy P.J."/>
        </authorList>
    </citation>
    <scope>INTERACTION WITH DRP2</scope>
    <scope>SUBUNIT</scope>
    <scope>TISSUE SPECIFICITY</scope>
    <scope>SUBCELLULAR LOCATION</scope>
</reference>
<reference key="7">
    <citation type="journal article" date="2003" name="Brain Res. Mol. Brain Res.">
        <title>Sensory neuron proteins interact with the intracellular domains of sodium channel NaV1.8.</title>
        <authorList>
            <person name="Malik-Hall M."/>
            <person name="Poon W.-Y.L."/>
            <person name="Baker M.D."/>
            <person name="Wood J.N."/>
            <person name="Okuse K."/>
        </authorList>
    </citation>
    <scope>INTERACTION WITH SCN10A</scope>
    <scope>IDENTIFICATION IN A COMPLEX WITH SCN10A</scope>
</reference>
<reference key="8">
    <citation type="journal article" date="2012" name="Nat. Commun.">
        <title>Quantitative maps of protein phosphorylation sites across 14 different rat organs and tissues.</title>
        <authorList>
            <person name="Lundby A."/>
            <person name="Secher A."/>
            <person name="Lage K."/>
            <person name="Nordsborg N.B."/>
            <person name="Dmytriyev A."/>
            <person name="Lundby C."/>
            <person name="Olsen J.V."/>
        </authorList>
    </citation>
    <scope>PHOSPHORYLATION [LARGE SCALE ANALYSIS] AT SER-7; SER-133; SER-243; SER-838; SER-1020; SER-1323; SER-1329 AND SER-1361</scope>
    <scope>IDENTIFICATION BY MASS SPECTROMETRY [LARGE SCALE ANALYSIS]</scope>
</reference>
<evidence type="ECO:0000250" key="1">
    <source>
        <dbReference type="UniProtKB" id="E1BM58"/>
    </source>
</evidence>
<evidence type="ECO:0000250" key="2">
    <source>
        <dbReference type="UniProtKB" id="O55103"/>
    </source>
</evidence>
<evidence type="ECO:0000250" key="3">
    <source>
        <dbReference type="UniProtKB" id="Q9BXM0"/>
    </source>
</evidence>
<evidence type="ECO:0000255" key="4">
    <source>
        <dbReference type="PROSITE-ProRule" id="PRU00143"/>
    </source>
</evidence>
<evidence type="ECO:0000256" key="5">
    <source>
        <dbReference type="SAM" id="MobiDB-lite"/>
    </source>
</evidence>
<evidence type="ECO:0000269" key="6">
    <source>
    </source>
</evidence>
<evidence type="ECO:0000269" key="7">
    <source>
    </source>
</evidence>
<evidence type="ECO:0000269" key="8">
    <source>
    </source>
</evidence>
<evidence type="ECO:0000269" key="9">
    <source>
    </source>
</evidence>
<evidence type="ECO:0000303" key="10">
    <source>
    </source>
</evidence>
<evidence type="ECO:0000303" key="11">
    <source>
    </source>
</evidence>
<evidence type="ECO:0000305" key="12"/>
<evidence type="ECO:0007744" key="13">
    <source>
    </source>
</evidence>
<comment type="function">
    <text evidence="2">Scaffolding protein that functions as part of a dystroglycan complex in Schwann cells, and as part of EZR and AHNAK-containing complexes in eye lens fiber cells. Required for the maintenance of the peripheral myelin sheath that is essential for normal transmission of nerve impulses and normal perception of sensory stimuli. Required for normal transport of MBP mRNA from the perinuclear to the paranodal regions. Required for normal remyelination after nerve injury. Required for normal elongation of Schwann cells and normal length of the internodes between the nodes of Ranvier. The demyelinated nodes of Ranvier permit saltatory transmission of nerve impulses; shorter internodes cause slower transmission of nerve impulses. Required for the formation of appositions between the abaxonal surface of the myelin sheath and the Schwann cell plasma membrane; the Schwann cell cytoplasm is restricted to regions between these appositions. Required for the formation of Cajal bands and of Schmidt-Lanterman incisures that correspond to short, cytoplasm-filled regions on myelinated nerves. Recruits DRP2 to the Schwann cell plasma membrane. Required for normal protein composition of the eye lens fiber cell plasma membrane and normal eye lens fiber cell morphology.</text>
</comment>
<comment type="subunit">
    <text evidence="1 2 3 7 8">Homodimer (via PDZ domain) (PubMed:11430802). Interacts with SCN10A. Found in a complex with SCN10A (PubMed:12591166). Interacts with DRP2 (PubMed:11430802). Identified in a dystroglycan complex that contains at least PRX, DRP2, UTRN, DMD and DAG1 (By similarity). Detected in a complex composed of at least EZR, AHNAK, PPL and PRX (By similarity). Identified in a complex with EZR, AHNAK, BFSP1, BFSP2, ANK2, PLEC, VIM and spectrin (By similarity).</text>
</comment>
<comment type="interaction">
    <interactant intactId="EBI-1800492">
        <id>Q63425</id>
    </interactant>
    <interactant intactId="EBI-1800320">
        <id>Q62968</id>
        <label>Scn10a</label>
    </interactant>
    <organismsDiffer>false</organismsDiffer>
    <experiments>2</experiments>
</comment>
<comment type="subcellular location">
    <molecule>Isoform 1</molecule>
    <subcellularLocation>
        <location evidence="6">Nucleus</location>
    </subcellularLocation>
    <subcellularLocation>
        <location evidence="6 9">Cytoplasm</location>
    </subcellularLocation>
    <subcellularLocation>
        <location evidence="6 7 9">Cell membrane</location>
        <topology evidence="12">Peripheral membrane protein</topology>
        <orientation evidence="12">Cytoplasmic side</orientation>
    </subcellularLocation>
    <text evidence="2 6 7 9">Detected in the Schwann cell nucleus prior to the onset of myelination (By similarity). Detected in Schwann cells at periaxonal myelin membranes (PubMed:10671475, PubMed:11430802, PubMed:8155317). Associated with the cell membrane during myelination (By similarity).</text>
</comment>
<comment type="subcellular location">
    <molecule>Isoform 2</molecule>
    <subcellularLocation>
        <location evidence="2">Cytoplasm</location>
    </subcellularLocation>
</comment>
<comment type="subcellular location">
    <subcellularLocation>
        <location evidence="2">Cell membrane</location>
    </subcellularLocation>
    <subcellularLocation>
        <location evidence="2">Cell junction</location>
    </subcellularLocation>
    <text evidence="2">Colocalizes with ACTB at tricellular junctions between eye lens fiber cells.</text>
</comment>
<comment type="alternative products">
    <event type="alternative splicing"/>
    <isoform>
        <id>Q63425-1</id>
        <name>1</name>
        <name>L-periaxin</name>
        <sequence type="displayed"/>
    </isoform>
    <isoform>
        <id>Q63425-2</id>
        <name>2</name>
        <name>S-periaxin</name>
        <sequence type="described" ref="VSP_004368 VSP_004369"/>
    </isoform>
</comment>
<comment type="tissue specificity">
    <text evidence="6 7 9">Detected in sciatic nerve and in trigeminal nerve Schwann cells (PubMed:11430802). Detected in myelinating Schwann cells in sciatic nerve (at protein level) (PubMed:10671475, PubMed:8155317).</text>
</comment>
<comment type="developmental stage">
    <text evidence="9">mRNA and protein levels peak in the sciatic nerve between posnatal days 8 and 20; thereafter they decline precipitously.</text>
</comment>
<comment type="domain">
    <text evidence="12">Has a remarkable domain of repetitive pentameric units sometimes followed by a tripeptide spacer, it may separate two functional basic and acidic domains.</text>
</comment>
<comment type="domain">
    <text evidence="6">The Arg/Lys-rich basic domain functions as a tripartite nuclear localization signal.</text>
</comment>
<comment type="domain">
    <text evidence="2 3">The PDZ domain contains the signal for export from the nucleus (By similarity). The N-terminal region including the PDZ domain is required for the formation of Cajal bands on myelinated nerves (By similarity).</text>
</comment>
<comment type="PTM">
    <text>The N-terminus is blocked.</text>
</comment>
<comment type="similarity">
    <text evidence="12">Belongs to the periaxin family.</text>
</comment>
<dbReference type="EMBL" id="Z29649">
    <property type="protein sequence ID" value="CAA82757.2"/>
    <property type="molecule type" value="mRNA"/>
</dbReference>
<dbReference type="PIR" id="I58157">
    <property type="entry name" value="I58157"/>
</dbReference>
<dbReference type="RefSeq" id="NP_076466.2">
    <molecule id="Q63425-1"/>
    <property type="nucleotide sequence ID" value="NM_023976.2"/>
</dbReference>
<dbReference type="SMR" id="Q63425"/>
<dbReference type="FunCoup" id="Q63425">
    <property type="interactions" value="280"/>
</dbReference>
<dbReference type="IntAct" id="Q63425">
    <property type="interactions" value="3"/>
</dbReference>
<dbReference type="STRING" id="10116.ENSRNOP00000024771"/>
<dbReference type="GlyGen" id="Q63425">
    <property type="glycosylation" value="5 sites, 1 O-linked glycan (5 sites)"/>
</dbReference>
<dbReference type="iPTMnet" id="Q63425"/>
<dbReference type="PhosphoSitePlus" id="Q63425"/>
<dbReference type="PaxDb" id="10116-ENSRNOP00000024771"/>
<dbReference type="GeneID" id="78960"/>
<dbReference type="KEGG" id="rno:78960"/>
<dbReference type="UCSC" id="RGD:619960">
    <molecule id="Q63425-1"/>
    <property type="organism name" value="rat"/>
</dbReference>
<dbReference type="AGR" id="RGD:619960"/>
<dbReference type="CTD" id="57716"/>
<dbReference type="RGD" id="619960">
    <property type="gene designation" value="Prx"/>
</dbReference>
<dbReference type="eggNOG" id="ENOG502QS7Y">
    <property type="taxonomic scope" value="Eukaryota"/>
</dbReference>
<dbReference type="InParanoid" id="Q63425"/>
<dbReference type="OrthoDB" id="89234at9989"/>
<dbReference type="PhylomeDB" id="Q63425"/>
<dbReference type="PRO" id="PR:Q63425"/>
<dbReference type="Proteomes" id="UP000002494">
    <property type="component" value="Unplaced"/>
</dbReference>
<dbReference type="GO" id="GO:0070161">
    <property type="term" value="C:anchoring junction"/>
    <property type="evidence" value="ECO:0007669"/>
    <property type="project" value="UniProtKB-SubCell"/>
</dbReference>
<dbReference type="GO" id="GO:0005737">
    <property type="term" value="C:cytoplasm"/>
    <property type="evidence" value="ECO:0000266"/>
    <property type="project" value="RGD"/>
</dbReference>
<dbReference type="GO" id="GO:0005634">
    <property type="term" value="C:nucleus"/>
    <property type="evidence" value="ECO:0000266"/>
    <property type="project" value="RGD"/>
</dbReference>
<dbReference type="GO" id="GO:0005886">
    <property type="term" value="C:plasma membrane"/>
    <property type="evidence" value="ECO:0000266"/>
    <property type="project" value="RGD"/>
</dbReference>
<dbReference type="GO" id="GO:0008366">
    <property type="term" value="P:axon ensheathment"/>
    <property type="evidence" value="ECO:0000270"/>
    <property type="project" value="RGD"/>
</dbReference>
<dbReference type="GO" id="GO:0021675">
    <property type="term" value="P:nerve development"/>
    <property type="evidence" value="ECO:0000270"/>
    <property type="project" value="RGD"/>
</dbReference>
<dbReference type="GO" id="GO:0032290">
    <property type="term" value="P:peripheral nervous system myelin formation"/>
    <property type="evidence" value="ECO:0000266"/>
    <property type="project" value="RGD"/>
</dbReference>
<dbReference type="GO" id="GO:0032287">
    <property type="term" value="P:peripheral nervous system myelin maintenance"/>
    <property type="evidence" value="ECO:0000266"/>
    <property type="project" value="RGD"/>
</dbReference>
<dbReference type="GO" id="GO:0043484">
    <property type="term" value="P:regulation of RNA splicing"/>
    <property type="evidence" value="ECO:0000318"/>
    <property type="project" value="GO_Central"/>
</dbReference>
<dbReference type="GO" id="GO:0019233">
    <property type="term" value="P:sensory perception of pain"/>
    <property type="evidence" value="ECO:0000266"/>
    <property type="project" value="RGD"/>
</dbReference>
<dbReference type="GO" id="GO:0019226">
    <property type="term" value="P:transmission of nerve impulse"/>
    <property type="evidence" value="ECO:0000266"/>
    <property type="project" value="RGD"/>
</dbReference>
<dbReference type="CDD" id="cd00136">
    <property type="entry name" value="PDZ_canonical"/>
    <property type="match status" value="1"/>
</dbReference>
<dbReference type="FunFam" id="2.30.42.10:FF:000149">
    <property type="entry name" value="Periaxin"/>
    <property type="match status" value="1"/>
</dbReference>
<dbReference type="Gene3D" id="2.30.42.10">
    <property type="match status" value="1"/>
</dbReference>
<dbReference type="InterPro" id="IPR052082">
    <property type="entry name" value="Myelin_sheath_structural"/>
</dbReference>
<dbReference type="InterPro" id="IPR001478">
    <property type="entry name" value="PDZ"/>
</dbReference>
<dbReference type="InterPro" id="IPR036034">
    <property type="entry name" value="PDZ_sf"/>
</dbReference>
<dbReference type="PANTHER" id="PTHR23348:SF42">
    <property type="entry name" value="PERIAXIN"/>
    <property type="match status" value="1"/>
</dbReference>
<dbReference type="PANTHER" id="PTHR23348">
    <property type="entry name" value="PERIAXIN/AHNAK"/>
    <property type="match status" value="1"/>
</dbReference>
<dbReference type="Pfam" id="PF00595">
    <property type="entry name" value="PDZ"/>
    <property type="match status" value="1"/>
</dbReference>
<dbReference type="SMART" id="SM00228">
    <property type="entry name" value="PDZ"/>
    <property type="match status" value="1"/>
</dbReference>
<dbReference type="SUPFAM" id="SSF50156">
    <property type="entry name" value="PDZ domain-like"/>
    <property type="match status" value="1"/>
</dbReference>
<dbReference type="PROSITE" id="PS50106">
    <property type="entry name" value="PDZ"/>
    <property type="match status" value="1"/>
</dbReference>
<keyword id="KW-0025">Alternative splicing</keyword>
<keyword id="KW-0965">Cell junction</keyword>
<keyword id="KW-1003">Cell membrane</keyword>
<keyword id="KW-0963">Cytoplasm</keyword>
<keyword id="KW-0903">Direct protein sequencing</keyword>
<keyword id="KW-0472">Membrane</keyword>
<keyword id="KW-0539">Nucleus</keyword>
<keyword id="KW-0597">Phosphoprotein</keyword>
<keyword id="KW-1185">Reference proteome</keyword>
<keyword id="KW-0677">Repeat</keyword>
<proteinExistence type="evidence at protein level"/>
<feature type="chain" id="PRO_0000058565" description="Periaxin">
    <location>
        <begin position="1"/>
        <end position="1383"/>
    </location>
</feature>
<feature type="domain" description="PDZ" evidence="4">
    <location>
        <begin position="16"/>
        <end position="99"/>
    </location>
</feature>
<feature type="repeat" description="1">
    <location>
        <begin position="432"/>
        <end position="436"/>
    </location>
</feature>
<feature type="repeat" description="2">
    <location>
        <begin position="440"/>
        <end position="444"/>
    </location>
</feature>
<feature type="repeat" description="3">
    <location>
        <begin position="448"/>
        <end position="452"/>
    </location>
</feature>
<feature type="repeat" description="4">
    <location>
        <begin position="456"/>
        <end position="460"/>
    </location>
</feature>
<feature type="repeat" description="5">
    <location>
        <begin position="461"/>
        <end position="465"/>
    </location>
</feature>
<feature type="repeat" description="6">
    <location>
        <begin position="466"/>
        <end position="470"/>
    </location>
</feature>
<feature type="repeat" description="7">
    <location>
        <begin position="474"/>
        <end position="478"/>
    </location>
</feature>
<feature type="repeat" description="8">
    <location>
        <begin position="482"/>
        <end position="486"/>
    </location>
</feature>
<feature type="repeat" description="9">
    <location>
        <begin position="487"/>
        <end position="491"/>
    </location>
</feature>
<feature type="repeat" description="10">
    <location>
        <begin position="492"/>
        <end position="496"/>
    </location>
</feature>
<feature type="repeat" description="11">
    <location>
        <begin position="497"/>
        <end position="501"/>
    </location>
</feature>
<feature type="repeat" description="12">
    <location>
        <begin position="502"/>
        <end position="506"/>
    </location>
</feature>
<feature type="repeat" description="13">
    <location>
        <begin position="507"/>
        <end position="511"/>
    </location>
</feature>
<feature type="repeat" description="14">
    <location>
        <begin position="515"/>
        <end position="519"/>
    </location>
</feature>
<feature type="repeat" description="15">
    <location>
        <begin position="523"/>
        <end position="527"/>
    </location>
</feature>
<feature type="repeat" description="16">
    <location>
        <begin position="531"/>
        <end position="535"/>
    </location>
</feature>
<feature type="repeat" description="17">
    <location>
        <begin position="536"/>
        <end position="540"/>
    </location>
</feature>
<feature type="repeat" description="18">
    <location>
        <begin position="544"/>
        <end position="548"/>
    </location>
</feature>
<feature type="repeat" description="19">
    <location>
        <begin position="549"/>
        <end position="553"/>
    </location>
</feature>
<feature type="repeat" description="20">
    <location>
        <begin position="554"/>
        <end position="558"/>
    </location>
</feature>
<feature type="repeat" description="21">
    <location>
        <begin position="562"/>
        <end position="566"/>
    </location>
</feature>
<feature type="repeat" description="22">
    <location>
        <begin position="567"/>
        <end position="571"/>
    </location>
</feature>
<feature type="repeat" description="23">
    <location>
        <begin position="575"/>
        <end position="579"/>
    </location>
</feature>
<feature type="repeat" description="24">
    <location>
        <begin position="580"/>
        <end position="584"/>
    </location>
</feature>
<feature type="repeat" description="25">
    <location>
        <begin position="585"/>
        <end position="589"/>
    </location>
</feature>
<feature type="repeat" description="26">
    <location>
        <begin position="593"/>
        <end position="597"/>
    </location>
</feature>
<feature type="repeat" description="27">
    <location>
        <begin position="601"/>
        <end position="605"/>
    </location>
</feature>
<feature type="repeat" description="28">
    <location>
        <begin position="606"/>
        <end position="610"/>
    </location>
</feature>
<feature type="repeat" description="29">
    <location>
        <begin position="611"/>
        <end position="615"/>
    </location>
</feature>
<feature type="repeat" description="30">
    <location>
        <begin position="619"/>
        <end position="623"/>
    </location>
</feature>
<feature type="repeat" description="31">
    <location>
        <begin position="627"/>
        <end position="631"/>
    </location>
</feature>
<feature type="repeat" description="32">
    <location>
        <begin position="632"/>
        <end position="636"/>
    </location>
</feature>
<feature type="repeat" description="33">
    <location>
        <begin position="637"/>
        <end position="641"/>
    </location>
</feature>
<feature type="repeat" description="34">
    <location>
        <begin position="645"/>
        <end position="649"/>
    </location>
</feature>
<feature type="repeat" description="35">
    <location>
        <begin position="653"/>
        <end position="657"/>
    </location>
</feature>
<feature type="repeat" description="36">
    <location>
        <begin position="658"/>
        <end position="662"/>
    </location>
</feature>
<feature type="repeat" description="37">
    <location>
        <begin position="663"/>
        <end position="667"/>
    </location>
</feature>
<feature type="repeat" description="38">
    <location>
        <begin position="671"/>
        <end position="675"/>
    </location>
</feature>
<feature type="repeat" description="39">
    <location>
        <begin position="676"/>
        <end position="680"/>
    </location>
</feature>
<feature type="repeat" description="40">
    <location>
        <begin position="684"/>
        <end position="688"/>
    </location>
</feature>
<feature type="repeat" description="41">
    <location>
        <begin position="689"/>
        <end position="693"/>
    </location>
</feature>
<feature type="repeat" description="42">
    <location>
        <begin position="694"/>
        <end position="698"/>
    </location>
</feature>
<feature type="repeat" description="43">
    <location>
        <begin position="699"/>
        <end position="703"/>
    </location>
</feature>
<feature type="repeat" description="44">
    <location>
        <begin position="705"/>
        <end position="709"/>
    </location>
</feature>
<feature type="repeat" description="45">
    <location>
        <begin position="713"/>
        <end position="717"/>
    </location>
</feature>
<feature type="repeat" description="46">
    <location>
        <begin position="718"/>
        <end position="722"/>
    </location>
</feature>
<feature type="region of interest" description="46 X 5 AA approximate tandem repeats of [LVMGIE]-[PSM]-[EDKA]-[LIVMA]-[AQKHPRT]; that may have a tripeptide spacer of [ALKD]-[IPV]-[KPH]">
    <location>
        <begin position="432"/>
        <end position="722"/>
    </location>
</feature>
<feature type="region of interest" description="Disordered" evidence="5">
    <location>
        <begin position="1251"/>
        <end position="1383"/>
    </location>
</feature>
<feature type="short sequence motif" description="Nuclear export signal" evidence="3">
    <location>
        <begin position="70"/>
        <end position="84"/>
    </location>
</feature>
<feature type="compositionally biased region" description="Low complexity" evidence="5">
    <location>
        <begin position="1267"/>
        <end position="1277"/>
    </location>
</feature>
<feature type="compositionally biased region" description="Basic and acidic residues" evidence="5">
    <location>
        <begin position="1346"/>
        <end position="1355"/>
    </location>
</feature>
<feature type="modified residue" description="Phosphoserine" evidence="13">
    <location>
        <position position="7"/>
    </location>
</feature>
<feature type="modified residue" description="Phosphoserine" evidence="13">
    <location>
        <position position="133"/>
    </location>
</feature>
<feature type="modified residue" description="Phosphoserine" evidence="13">
    <location>
        <position position="243"/>
    </location>
</feature>
<feature type="modified residue" description="Phosphoserine" evidence="13">
    <location>
        <position position="838"/>
    </location>
</feature>
<feature type="modified residue" description="Phosphoserine" evidence="2">
    <location>
        <position position="971"/>
    </location>
</feature>
<feature type="modified residue" description="Phosphoserine" evidence="13">
    <location>
        <position position="1020"/>
    </location>
</feature>
<feature type="modified residue" description="Phosphoserine" evidence="2">
    <location>
        <position position="1271"/>
    </location>
</feature>
<feature type="modified residue" description="Phosphoserine" evidence="2">
    <location>
        <position position="1275"/>
    </location>
</feature>
<feature type="modified residue" description="Phosphoserine" evidence="2">
    <location>
        <position position="1277"/>
    </location>
</feature>
<feature type="modified residue" description="Phosphoserine" evidence="2">
    <location>
        <position position="1285"/>
    </location>
</feature>
<feature type="modified residue" description="Phosphoserine" evidence="13">
    <location>
        <position position="1323"/>
    </location>
</feature>
<feature type="modified residue" description="Phosphoserine" evidence="13">
    <location>
        <position position="1329"/>
    </location>
</feature>
<feature type="modified residue" description="Phosphoserine" evidence="13">
    <location>
        <position position="1361"/>
    </location>
</feature>
<feature type="splice variant" id="VSP_004368" description="In isoform 2." evidence="11">
    <original>NIQSLSPVKKKKMVIGTLGT</original>
    <variation>VRVLSPVPVQDSPSDAVAAP</variation>
    <location>
        <begin position="128"/>
        <end position="147"/>
    </location>
</feature>
<feature type="splice variant" id="VSP_004369" description="In isoform 2." evidence="11">
    <location>
        <begin position="148"/>
        <end position="1383"/>
    </location>
</feature>
<name>PRAX_RAT</name>